<evidence type="ECO:0000255" key="1">
    <source>
        <dbReference type="HAMAP-Rule" id="MF_03102"/>
    </source>
</evidence>
<accession>Q59LL4</accession>
<accession>A0A1D8PH94</accession>
<accession>Q59LM9</accession>
<name>MDM10_CANAL</name>
<organism>
    <name type="scientific">Candida albicans (strain SC5314 / ATCC MYA-2876)</name>
    <name type="common">Yeast</name>
    <dbReference type="NCBI Taxonomy" id="237561"/>
    <lineage>
        <taxon>Eukaryota</taxon>
        <taxon>Fungi</taxon>
        <taxon>Dikarya</taxon>
        <taxon>Ascomycota</taxon>
        <taxon>Saccharomycotina</taxon>
        <taxon>Pichiomycetes</taxon>
        <taxon>Debaryomycetaceae</taxon>
        <taxon>Candida/Lodderomyces clade</taxon>
        <taxon>Candida</taxon>
    </lineage>
</organism>
<dbReference type="EMBL" id="CP017624">
    <property type="protein sequence ID" value="AOW27504.1"/>
    <property type="molecule type" value="Genomic_DNA"/>
</dbReference>
<dbReference type="RefSeq" id="XP_710612.2">
    <property type="nucleotide sequence ID" value="XM_705520.2"/>
</dbReference>
<dbReference type="SMR" id="Q59LL4"/>
<dbReference type="FunCoup" id="Q59LL4">
    <property type="interactions" value="70"/>
</dbReference>
<dbReference type="STRING" id="237561.Q59LL4"/>
<dbReference type="EnsemblFungi" id="C2_04800C_A-T">
    <property type="protein sequence ID" value="C2_04800C_A-T-p1"/>
    <property type="gene ID" value="C2_04800C_A"/>
</dbReference>
<dbReference type="GeneID" id="3647778"/>
<dbReference type="KEGG" id="cal:CAALFM_C204800CA"/>
<dbReference type="CGD" id="CAL0000180412">
    <property type="gene designation" value="MDM10"/>
</dbReference>
<dbReference type="VEuPathDB" id="FungiDB:C2_04800C_A"/>
<dbReference type="eggNOG" id="ENOG502QUN5">
    <property type="taxonomic scope" value="Eukaryota"/>
</dbReference>
<dbReference type="HOGENOM" id="CLU_026505_0_0_1"/>
<dbReference type="InParanoid" id="Q59LL4"/>
<dbReference type="OrthoDB" id="2103793at2759"/>
<dbReference type="PRO" id="PR:Q59LL4"/>
<dbReference type="Proteomes" id="UP000000559">
    <property type="component" value="Chromosome 2"/>
</dbReference>
<dbReference type="GO" id="GO:0032865">
    <property type="term" value="C:ERMES complex"/>
    <property type="evidence" value="ECO:0000318"/>
    <property type="project" value="GO_Central"/>
</dbReference>
<dbReference type="GO" id="GO:0001401">
    <property type="term" value="C:SAM complex"/>
    <property type="evidence" value="ECO:0000318"/>
    <property type="project" value="GO_Central"/>
</dbReference>
<dbReference type="GO" id="GO:0051654">
    <property type="term" value="P:establishment of mitochondrion localization"/>
    <property type="evidence" value="ECO:0000318"/>
    <property type="project" value="GO_Central"/>
</dbReference>
<dbReference type="GO" id="GO:0000002">
    <property type="term" value="P:mitochondrial genome maintenance"/>
    <property type="evidence" value="ECO:0007669"/>
    <property type="project" value="UniProtKB-UniRule"/>
</dbReference>
<dbReference type="GO" id="GO:0070096">
    <property type="term" value="P:mitochondrial outer membrane translocase complex assembly"/>
    <property type="evidence" value="ECO:0000318"/>
    <property type="project" value="GO_Central"/>
</dbReference>
<dbReference type="GO" id="GO:1990456">
    <property type="term" value="P:mitochondrion-endoplasmic reticulum membrane tethering"/>
    <property type="evidence" value="ECO:0000318"/>
    <property type="project" value="GO_Central"/>
</dbReference>
<dbReference type="GO" id="GO:0015914">
    <property type="term" value="P:phospholipid transport"/>
    <property type="evidence" value="ECO:0000318"/>
    <property type="project" value="GO_Central"/>
</dbReference>
<dbReference type="GO" id="GO:0045040">
    <property type="term" value="P:protein insertion into mitochondrial outer membrane"/>
    <property type="evidence" value="ECO:0000318"/>
    <property type="project" value="GO_Central"/>
</dbReference>
<dbReference type="HAMAP" id="MF_03102">
    <property type="entry name" value="Mdm10"/>
    <property type="match status" value="1"/>
</dbReference>
<dbReference type="InterPro" id="IPR027539">
    <property type="entry name" value="Mdm10"/>
</dbReference>
<dbReference type="PANTHER" id="PTHR28035">
    <property type="entry name" value="MITOCHONDRIAL DISTRIBUTION AND MORPHOLOGY PROTEIN 10"/>
    <property type="match status" value="1"/>
</dbReference>
<dbReference type="PANTHER" id="PTHR28035:SF1">
    <property type="entry name" value="MITOCHONDRIAL DISTRIBUTION AND MORPHOLOGY PROTEIN 10"/>
    <property type="match status" value="1"/>
</dbReference>
<dbReference type="Pfam" id="PF12519">
    <property type="entry name" value="MDM10"/>
    <property type="match status" value="1"/>
</dbReference>
<comment type="function">
    <text evidence="1">Component of the ERMES/MDM complex, which serves as a molecular tether to connect the endoplasmic reticulum and mitochondria. Components of this complex are involved in the control of mitochondrial shape and protein biogenesis and may function in phospholipid exchange. MDM10 is involved in the late assembly steps of the general translocase of the mitochondrial outer membrane (TOM complex). Functions in the TOM40-specific route of the assembly of outer membrane beta-barrel proteins, including the association of TOM40 with the receptor TOM22 and small TOM proteins. Can associate with the SAM(core) complex as well as the MDM12-MMM1 complex, both involved in late steps of the major beta-barrel assembly pathway, that is responsible for biogenesis of all outer membrane beta-barrel proteins. May act as a switch that shuttles between both complexes and channels precursor proteins into the TOM40-specific pathway. Plays a role in mitochondrial morphology and in the inheritance of mitochondria.</text>
</comment>
<comment type="subunit">
    <text evidence="1">Component of the ER-mitochondria encounter structure (ERMES) or MDM complex, composed of MMM1, MDM10, MDM12 and MDM34. Associates with the mitochondrial outer membrane sorting assembly machinery SAM(core) complex.</text>
</comment>
<comment type="subcellular location">
    <subcellularLocation>
        <location evidence="1">Mitochondrion outer membrane</location>
        <topology evidence="1">Multi-pass membrane protein</topology>
    </subcellularLocation>
    <text evidence="1">The ERMES/MDM complex localizes to a few discrete foci (around 10 per single cell), that represent mitochondria-endoplasmic reticulum junctions. These foci are often found next to mtDNA nucleoids.</text>
</comment>
<comment type="domain">
    <text>Lacks alpha-helical transmembrane segments, suggesting that it resides in the membrane via beta-sheet conformations similar to those predicted for other outer membrane proteins and porin.</text>
</comment>
<comment type="similarity">
    <text evidence="1">Belongs to the MDM10 family.</text>
</comment>
<gene>
    <name evidence="1" type="primary">MDM10</name>
    <name type="ordered locus">CAALFM_C204800CA</name>
    <name type="ORF">CaO19.184</name>
    <name type="ORF">CaO19.7814</name>
</gene>
<keyword id="KW-0472">Membrane</keyword>
<keyword id="KW-0496">Mitochondrion</keyword>
<keyword id="KW-1000">Mitochondrion outer membrane</keyword>
<keyword id="KW-1185">Reference proteome</keyword>
<keyword id="KW-0812">Transmembrane</keyword>
<keyword id="KW-1134">Transmembrane beta strand</keyword>
<proteinExistence type="inferred from homology"/>
<sequence>MYTYMEYLQKCFYKSTNWNEDNIYSNITATSQALLDFPIPNGFKIDSSSKTTDYSASSFTLSNHHQINGSLAYLYSSIPLTNTMGTKDVSLQDAIAGFRIIEPSVGLRSKLKNNIMSNRSSLLYGRMYFPGSALEAMIIKRLTKNSQLLIKCVNNPHLEKNGTMIVYLQNNTAKYSRELIYSTNEALIGLRCLYNLGDATSHNFTNINPAVIPKFDNSVVSIGTEIWYAARTMSPGLSAALRYSTRSTSTGKPLTMTLAINPIVGHVSSTYTVKTSVASTFCSKYDFNVFSYASNLSLGFELYSYANKKKNSFPSFEHHEIHSSSEENKYLKKHPELQRHHNLHHNLHHQRVPIKSHKYEGNRTIINPIQNLDNVYHINPTLLSSNGSTSTTTNNENTNTSETVTAAFQNLVNESDFSSVFKFSTSLNDKVVKILWEGRLKEFLVSTGVKLSLNPITNTPEFNKLGISFSYAL</sequence>
<protein>
    <recommendedName>
        <fullName evidence="1">Mitochondrial distribution and morphology protein 10</fullName>
    </recommendedName>
    <alternativeName>
        <fullName evidence="1">Mitochondrial inheritance component MDM10</fullName>
    </alternativeName>
</protein>
<reference key="1">
    <citation type="journal article" date="2004" name="Proc. Natl. Acad. Sci. U.S.A.">
        <title>The diploid genome sequence of Candida albicans.</title>
        <authorList>
            <person name="Jones T."/>
            <person name="Federspiel N.A."/>
            <person name="Chibana H."/>
            <person name="Dungan J."/>
            <person name="Kalman S."/>
            <person name="Magee B.B."/>
            <person name="Newport G."/>
            <person name="Thorstenson Y.R."/>
            <person name="Agabian N."/>
            <person name="Magee P.T."/>
            <person name="Davis R.W."/>
            <person name="Scherer S."/>
        </authorList>
    </citation>
    <scope>NUCLEOTIDE SEQUENCE [LARGE SCALE GENOMIC DNA]</scope>
    <source>
        <strain>SC5314 / ATCC MYA-2876</strain>
    </source>
</reference>
<reference key="2">
    <citation type="journal article" date="2007" name="Genome Biol.">
        <title>Assembly of the Candida albicans genome into sixteen supercontigs aligned on the eight chromosomes.</title>
        <authorList>
            <person name="van het Hoog M."/>
            <person name="Rast T.J."/>
            <person name="Martchenko M."/>
            <person name="Grindle S."/>
            <person name="Dignard D."/>
            <person name="Hogues H."/>
            <person name="Cuomo C."/>
            <person name="Berriman M."/>
            <person name="Scherer S."/>
            <person name="Magee B.B."/>
            <person name="Whiteway M."/>
            <person name="Chibana H."/>
            <person name="Nantel A."/>
            <person name="Magee P.T."/>
        </authorList>
    </citation>
    <scope>GENOME REANNOTATION</scope>
    <source>
        <strain>SC5314 / ATCC MYA-2876</strain>
    </source>
</reference>
<reference key="3">
    <citation type="journal article" date="2013" name="Genome Biol.">
        <title>Assembly of a phased diploid Candida albicans genome facilitates allele-specific measurements and provides a simple model for repeat and indel structure.</title>
        <authorList>
            <person name="Muzzey D."/>
            <person name="Schwartz K."/>
            <person name="Weissman J.S."/>
            <person name="Sherlock G."/>
        </authorList>
    </citation>
    <scope>NUCLEOTIDE SEQUENCE [LARGE SCALE GENOMIC DNA]</scope>
    <scope>GENOME REANNOTATION</scope>
    <source>
        <strain>SC5314 / ATCC MYA-2876</strain>
    </source>
</reference>
<feature type="chain" id="PRO_0000384169" description="Mitochondrial distribution and morphology protein 10">
    <location>
        <begin position="1"/>
        <end position="473"/>
    </location>
</feature>